<name>M1_I86A2</name>
<feature type="chain" id="PRO_0000326325" description="Matrix protein 1">
    <location>
        <begin position="1"/>
        <end position="252"/>
    </location>
</feature>
<feature type="region of interest" description="Membrane-binding" evidence="1">
    <location>
        <begin position="1"/>
        <end position="164"/>
    </location>
</feature>
<feature type="region of interest" description="RNP-binding" evidence="1">
    <location>
        <begin position="165"/>
        <end position="252"/>
    </location>
</feature>
<feature type="short sequence motif" description="Nuclear localization signal" evidence="1">
    <location>
        <begin position="101"/>
        <end position="105"/>
    </location>
</feature>
<dbReference type="EMBL" id="M63540">
    <property type="protein sequence ID" value="AAA43288.1"/>
    <property type="molecule type" value="Genomic_RNA"/>
</dbReference>
<dbReference type="SMR" id="Q67169"/>
<dbReference type="GO" id="GO:0042025">
    <property type="term" value="C:host cell nucleus"/>
    <property type="evidence" value="ECO:0007669"/>
    <property type="project" value="UniProtKB-SubCell"/>
</dbReference>
<dbReference type="GO" id="GO:0016020">
    <property type="term" value="C:membrane"/>
    <property type="evidence" value="ECO:0007669"/>
    <property type="project" value="UniProtKB-KW"/>
</dbReference>
<dbReference type="GO" id="GO:0055036">
    <property type="term" value="C:virion membrane"/>
    <property type="evidence" value="ECO:0007669"/>
    <property type="project" value="UniProtKB-SubCell"/>
</dbReference>
<dbReference type="GO" id="GO:0003723">
    <property type="term" value="F:RNA binding"/>
    <property type="evidence" value="ECO:0007669"/>
    <property type="project" value="UniProtKB-UniRule"/>
</dbReference>
<dbReference type="GO" id="GO:0039660">
    <property type="term" value="F:structural constituent of virion"/>
    <property type="evidence" value="ECO:0007669"/>
    <property type="project" value="UniProtKB-UniRule"/>
</dbReference>
<dbReference type="GO" id="GO:0046761">
    <property type="term" value="P:viral budding from plasma membrane"/>
    <property type="evidence" value="ECO:0007669"/>
    <property type="project" value="UniProtKB-UniRule"/>
</dbReference>
<dbReference type="FunFam" id="1.10.10.180:FF:000001">
    <property type="entry name" value="Matrix protein 1"/>
    <property type="match status" value="1"/>
</dbReference>
<dbReference type="FunFam" id="1.20.91.10:FF:000001">
    <property type="entry name" value="Matrix protein 1"/>
    <property type="match status" value="1"/>
</dbReference>
<dbReference type="Gene3D" id="1.10.10.180">
    <property type="match status" value="1"/>
</dbReference>
<dbReference type="Gene3D" id="1.20.91.10">
    <property type="match status" value="1"/>
</dbReference>
<dbReference type="HAMAP" id="MF_04068">
    <property type="entry name" value="INFV_M1"/>
    <property type="match status" value="1"/>
</dbReference>
<dbReference type="InterPro" id="IPR036039">
    <property type="entry name" value="Flu_matrix_M1"/>
</dbReference>
<dbReference type="InterPro" id="IPR013188">
    <property type="entry name" value="Flu_matrix_M1_C"/>
</dbReference>
<dbReference type="InterPro" id="IPR001561">
    <property type="entry name" value="Flu_matrix_M1_N"/>
</dbReference>
<dbReference type="InterPro" id="IPR015423">
    <property type="entry name" value="Flu_matrix_M1_N_sub1"/>
</dbReference>
<dbReference type="InterPro" id="IPR015799">
    <property type="entry name" value="Flu_matrix_M1_N_sub2"/>
</dbReference>
<dbReference type="InterPro" id="IPR037533">
    <property type="entry name" value="INFV_M1"/>
</dbReference>
<dbReference type="Pfam" id="PF00598">
    <property type="entry name" value="Flu_M1"/>
    <property type="match status" value="1"/>
</dbReference>
<dbReference type="Pfam" id="PF08289">
    <property type="entry name" value="Flu_M1_C"/>
    <property type="match status" value="1"/>
</dbReference>
<dbReference type="SMART" id="SM00759">
    <property type="entry name" value="Flu_M1_C"/>
    <property type="match status" value="1"/>
</dbReference>
<dbReference type="SUPFAM" id="SSF48145">
    <property type="entry name" value="Influenza virus matrix protein M1"/>
    <property type="match status" value="1"/>
</dbReference>
<sequence>MSLLTEVETYVLSIVPSGPLKAEIAQRLEDVFAGKNTDLEALMEWLKTRPILSPLTKGILGFVFTLTVPSERGLQRRRFVQNALSGNGDPNNMDRAVKLYKKLKREITFHGAKEVALSYSTGALASCMGLIYNRMGTVTTEVAFGLVCATCEQIADSQHRSHRQMVTTTNPLIRHENRMVLASTTAKTMEQVAGSSEQAAEAMEVASKARQMVQAMRTIGTHPSSSAGLKDDLLENLQAYQKRMGVQMQRFK</sequence>
<accession>Q67169</accession>
<organism>
    <name type="scientific">Influenza A virus (strain A/Equine/Kentucky/2/1986 H3N8)</name>
    <dbReference type="NCBI Taxonomy" id="385605"/>
    <lineage>
        <taxon>Viruses</taxon>
        <taxon>Riboviria</taxon>
        <taxon>Orthornavirae</taxon>
        <taxon>Negarnaviricota</taxon>
        <taxon>Polyploviricotina</taxon>
        <taxon>Insthoviricetes</taxon>
        <taxon>Articulavirales</taxon>
        <taxon>Orthomyxoviridae</taxon>
        <taxon>Alphainfluenzavirus</taxon>
        <taxon>Alphainfluenzavirus influenzae</taxon>
        <taxon>Influenza A virus</taxon>
    </lineage>
</organism>
<keyword id="KW-0025">Alternative splicing</keyword>
<keyword id="KW-1048">Host nucleus</keyword>
<keyword id="KW-0472">Membrane</keyword>
<keyword id="KW-0694">RNA-binding</keyword>
<keyword id="KW-0468">Viral matrix protein</keyword>
<keyword id="KW-0946">Virion</keyword>
<organismHost>
    <name type="scientific">Aves</name>
    <dbReference type="NCBI Taxonomy" id="8782"/>
</organismHost>
<organismHost>
    <name type="scientific">Equus caballus</name>
    <name type="common">Horse</name>
    <dbReference type="NCBI Taxonomy" id="9796"/>
</organismHost>
<gene>
    <name evidence="1" type="primary">M</name>
</gene>
<comment type="function">
    <text evidence="1">Plays critical roles in virus replication, from virus entry and uncoating to assembly and budding of the virus particle. M1 binding to ribonucleocapsids (RNPs) in nucleus seems to inhibit viral transcription. Interaction of viral NEP with M1-RNP is thought to promote nuclear export of the complex, which is targeted to the virion assembly site at the apical plasma membrane in polarized epithelial cells. Interactions with NA and HA may bring M1, a non-raft-associated protein, into lipid rafts. Forms a continuous shell on the inner side of the lipid bilayer in virion, where it binds the RNP. During virus entry into cell, the M2 ion channel acidifies the internal virion core, inducing M1 dissociation from the RNP. M1-free RNPs are transported to the nucleus, where viral transcription and replication can take place.</text>
</comment>
<comment type="function">
    <text evidence="1">Determines the virion's shape: spherical or filamentous. Clinical isolates of influenza are characterized by the presence of significant proportion of filamentous virions, whereas after multiple passage on eggs or cell culture, virions have only spherical morphology. Filamentous virions are thought to be important to infect neighboring cells, and spherical virions more suited to spread through aerosol between hosts organisms.</text>
</comment>
<comment type="subunit">
    <text evidence="1">Homodimer and homomultimer. Interacts with NEP. Binds ribonucleocapsid by both interacting with genomic RNA and NP protein. May interact with HA and NA. Cannot bind NP without genomic RNA.</text>
</comment>
<comment type="subcellular location">
    <subcellularLocation>
        <location evidence="1">Virion membrane</location>
        <topology evidence="1">Peripheral membrane protein</topology>
        <orientation evidence="1">Cytoplasmic side</orientation>
    </subcellularLocation>
    <subcellularLocation>
        <location evidence="1">Host nucleus</location>
    </subcellularLocation>
</comment>
<comment type="alternative products">
    <event type="alternative splicing"/>
    <isoform>
        <id>Q67169-1</id>
        <name>M1</name>
        <sequence type="displayed"/>
    </isoform>
    <isoform>
        <id>Q67168-1</id>
        <name>M2</name>
        <sequence type="external"/>
    </isoform>
    <text>Only the first 9 residues are shared by the 2 isoforms.</text>
</comment>
<comment type="miscellaneous">
    <text evidence="1">Most abundant protein in virion. When expressed alone can form virus-like particles in transfected cells.</text>
</comment>
<comment type="similarity">
    <text evidence="1">Belongs to the influenza viruses Matrix protein M1 family.</text>
</comment>
<reference key="1">
    <citation type="journal article" date="1991" name="J. Virol.">
        <title>Evolutionary analysis of the influenza A virus M gene with comparison of the M1 and M2 proteins.</title>
        <authorList>
            <person name="Ito T."/>
            <person name="Gorman O.T."/>
            <person name="Kawaoka Y."/>
            <person name="Bean W.J."/>
            <person name="Webster R.G."/>
        </authorList>
    </citation>
    <scope>NUCLEOTIDE SEQUENCE [GENOMIC RNA]</scope>
</reference>
<proteinExistence type="inferred from homology"/>
<protein>
    <recommendedName>
        <fullName evidence="1">Matrix protein 1</fullName>
        <shortName evidence="1">M1</shortName>
    </recommendedName>
</protein>
<evidence type="ECO:0000255" key="1">
    <source>
        <dbReference type="HAMAP-Rule" id="MF_04068"/>
    </source>
</evidence>